<reference key="1">
    <citation type="journal article" date="2009" name="Infect. Immun.">
        <title>Comparative genomics reveal extensive transposon-mediated genomic plasticity and diversity among potential effector proteins within the genus Coxiella.</title>
        <authorList>
            <person name="Beare P.A."/>
            <person name="Unsworth N."/>
            <person name="Andoh M."/>
            <person name="Voth D.E."/>
            <person name="Omsland A."/>
            <person name="Gilk S.D."/>
            <person name="Williams K.P."/>
            <person name="Sobral B.W."/>
            <person name="Kupko J.J. III"/>
            <person name="Porcella S.F."/>
            <person name="Samuel J.E."/>
            <person name="Heinzen R.A."/>
        </authorList>
    </citation>
    <scope>NUCLEOTIDE SEQUENCE [LARGE SCALE GENOMIC DNA]</scope>
    <source>
        <strain>CbuK_Q154</strain>
    </source>
</reference>
<evidence type="ECO:0000255" key="1">
    <source>
        <dbReference type="HAMAP-Rule" id="MF_00639"/>
    </source>
</evidence>
<accession>B6J5K6</accession>
<comment type="function">
    <text evidence="1">Cell wall formation. Catalyzes the addition of glutamate to the nucleotide precursor UDP-N-acetylmuramoyl-L-alanine (UMA).</text>
</comment>
<comment type="catalytic activity">
    <reaction evidence="1">
        <text>UDP-N-acetyl-alpha-D-muramoyl-L-alanine + D-glutamate + ATP = UDP-N-acetyl-alpha-D-muramoyl-L-alanyl-D-glutamate + ADP + phosphate + H(+)</text>
        <dbReference type="Rhea" id="RHEA:16429"/>
        <dbReference type="ChEBI" id="CHEBI:15378"/>
        <dbReference type="ChEBI" id="CHEBI:29986"/>
        <dbReference type="ChEBI" id="CHEBI:30616"/>
        <dbReference type="ChEBI" id="CHEBI:43474"/>
        <dbReference type="ChEBI" id="CHEBI:83898"/>
        <dbReference type="ChEBI" id="CHEBI:83900"/>
        <dbReference type="ChEBI" id="CHEBI:456216"/>
        <dbReference type="EC" id="6.3.2.9"/>
    </reaction>
</comment>
<comment type="pathway">
    <text evidence="1">Cell wall biogenesis; peptidoglycan biosynthesis.</text>
</comment>
<comment type="subcellular location">
    <subcellularLocation>
        <location evidence="1">Cytoplasm</location>
    </subcellularLocation>
</comment>
<comment type="similarity">
    <text evidence="1">Belongs to the MurCDEF family.</text>
</comment>
<keyword id="KW-0067">ATP-binding</keyword>
<keyword id="KW-0131">Cell cycle</keyword>
<keyword id="KW-0132">Cell division</keyword>
<keyword id="KW-0133">Cell shape</keyword>
<keyword id="KW-0961">Cell wall biogenesis/degradation</keyword>
<keyword id="KW-0963">Cytoplasm</keyword>
<keyword id="KW-0436">Ligase</keyword>
<keyword id="KW-0547">Nucleotide-binding</keyword>
<keyword id="KW-0573">Peptidoglycan synthesis</keyword>
<feature type="chain" id="PRO_1000130848" description="UDP-N-acetylmuramoylalanine--D-glutamate ligase">
    <location>
        <begin position="1"/>
        <end position="442"/>
    </location>
</feature>
<feature type="binding site" evidence="1">
    <location>
        <begin position="113"/>
        <end position="119"/>
    </location>
    <ligand>
        <name>ATP</name>
        <dbReference type="ChEBI" id="CHEBI:30616"/>
    </ligand>
</feature>
<organism>
    <name type="scientific">Coxiella burnetii (strain CbuK_Q154)</name>
    <name type="common">Coxiella burnetii (strain Q154)</name>
    <dbReference type="NCBI Taxonomy" id="434924"/>
    <lineage>
        <taxon>Bacteria</taxon>
        <taxon>Pseudomonadati</taxon>
        <taxon>Pseudomonadota</taxon>
        <taxon>Gammaproteobacteria</taxon>
        <taxon>Legionellales</taxon>
        <taxon>Coxiellaceae</taxon>
        <taxon>Coxiella</taxon>
    </lineage>
</organism>
<sequence length="442" mass="48734">MSSESLTVIVGLGKTGLSCAQFLAAKNQPFAVMDSREEPPEWENFIKTYPRVELIRGQFSEKLLNEAQEIILSPGVSLQEPLIAKQAAQGKSIIGDIELFARNVNKPIIAITGSNGKTTVTTVVGLMMKAAGRNVSVCGNIGEPVLEQITPEPDYYVLELSSFQLETTFSLRSQAATILNISEDHMNRYATLQDYLRAKQRIYTDCFIPIVNADEPEIWCHLPFNKKPLSFGLNNAADFSLAEHNQKTSIAYQGKILMPIQELKLNARHHLQNALAALALGTAAKIPIENMLHLLRDFSGIRHRCQWVRKYKEIDYYNDSKGTNVGATRAAIESLGQAAKGQLILIAGGQGKGADFSPLKDVVKRYVKQVILIGEDAPLLEKTLKEITVIKHADSMNEAVKRSTQAAKAGDIVLLSPACASFDMFTNYEHRGDVFTETVEAL</sequence>
<protein>
    <recommendedName>
        <fullName evidence="1">UDP-N-acetylmuramoylalanine--D-glutamate ligase</fullName>
        <ecNumber evidence="1">6.3.2.9</ecNumber>
    </recommendedName>
    <alternativeName>
        <fullName evidence="1">D-glutamic acid-adding enzyme</fullName>
    </alternativeName>
    <alternativeName>
        <fullName evidence="1">UDP-N-acetylmuramoyl-L-alanyl-D-glutamate synthetase</fullName>
    </alternativeName>
</protein>
<name>MURD_COXB1</name>
<gene>
    <name evidence="1" type="primary">murD</name>
    <name type="ordered locus">CbuK_1922</name>
</gene>
<dbReference type="EC" id="6.3.2.9" evidence="1"/>
<dbReference type="EMBL" id="CP001020">
    <property type="protein sequence ID" value="ACJ21032.1"/>
    <property type="molecule type" value="Genomic_DNA"/>
</dbReference>
<dbReference type="RefSeq" id="WP_005769470.1">
    <property type="nucleotide sequence ID" value="NC_011528.1"/>
</dbReference>
<dbReference type="SMR" id="B6J5K6"/>
<dbReference type="KEGG" id="cbc:CbuK_1922"/>
<dbReference type="HOGENOM" id="CLU_032540_1_0_6"/>
<dbReference type="UniPathway" id="UPA00219"/>
<dbReference type="GO" id="GO:0005737">
    <property type="term" value="C:cytoplasm"/>
    <property type="evidence" value="ECO:0007669"/>
    <property type="project" value="UniProtKB-SubCell"/>
</dbReference>
<dbReference type="GO" id="GO:0005524">
    <property type="term" value="F:ATP binding"/>
    <property type="evidence" value="ECO:0007669"/>
    <property type="project" value="UniProtKB-UniRule"/>
</dbReference>
<dbReference type="GO" id="GO:0008764">
    <property type="term" value="F:UDP-N-acetylmuramoylalanine-D-glutamate ligase activity"/>
    <property type="evidence" value="ECO:0007669"/>
    <property type="project" value="UniProtKB-UniRule"/>
</dbReference>
<dbReference type="GO" id="GO:0051301">
    <property type="term" value="P:cell division"/>
    <property type="evidence" value="ECO:0007669"/>
    <property type="project" value="UniProtKB-KW"/>
</dbReference>
<dbReference type="GO" id="GO:0071555">
    <property type="term" value="P:cell wall organization"/>
    <property type="evidence" value="ECO:0007669"/>
    <property type="project" value="UniProtKB-KW"/>
</dbReference>
<dbReference type="GO" id="GO:0009252">
    <property type="term" value="P:peptidoglycan biosynthetic process"/>
    <property type="evidence" value="ECO:0007669"/>
    <property type="project" value="UniProtKB-UniRule"/>
</dbReference>
<dbReference type="GO" id="GO:0008360">
    <property type="term" value="P:regulation of cell shape"/>
    <property type="evidence" value="ECO:0007669"/>
    <property type="project" value="UniProtKB-KW"/>
</dbReference>
<dbReference type="Gene3D" id="3.90.190.20">
    <property type="entry name" value="Mur ligase, C-terminal domain"/>
    <property type="match status" value="1"/>
</dbReference>
<dbReference type="Gene3D" id="3.40.1190.10">
    <property type="entry name" value="Mur-like, catalytic domain"/>
    <property type="match status" value="1"/>
</dbReference>
<dbReference type="Gene3D" id="3.40.50.720">
    <property type="entry name" value="NAD(P)-binding Rossmann-like Domain"/>
    <property type="match status" value="1"/>
</dbReference>
<dbReference type="HAMAP" id="MF_00639">
    <property type="entry name" value="MurD"/>
    <property type="match status" value="1"/>
</dbReference>
<dbReference type="InterPro" id="IPR036565">
    <property type="entry name" value="Mur-like_cat_sf"/>
</dbReference>
<dbReference type="InterPro" id="IPR004101">
    <property type="entry name" value="Mur_ligase_C"/>
</dbReference>
<dbReference type="InterPro" id="IPR036615">
    <property type="entry name" value="Mur_ligase_C_dom_sf"/>
</dbReference>
<dbReference type="InterPro" id="IPR013221">
    <property type="entry name" value="Mur_ligase_cen"/>
</dbReference>
<dbReference type="InterPro" id="IPR005762">
    <property type="entry name" value="MurD"/>
</dbReference>
<dbReference type="NCBIfam" id="TIGR01087">
    <property type="entry name" value="murD"/>
    <property type="match status" value="1"/>
</dbReference>
<dbReference type="PANTHER" id="PTHR43692">
    <property type="entry name" value="UDP-N-ACETYLMURAMOYLALANINE--D-GLUTAMATE LIGASE"/>
    <property type="match status" value="1"/>
</dbReference>
<dbReference type="PANTHER" id="PTHR43692:SF1">
    <property type="entry name" value="UDP-N-ACETYLMURAMOYLALANINE--D-GLUTAMATE LIGASE"/>
    <property type="match status" value="1"/>
</dbReference>
<dbReference type="Pfam" id="PF02875">
    <property type="entry name" value="Mur_ligase_C"/>
    <property type="match status" value="1"/>
</dbReference>
<dbReference type="Pfam" id="PF08245">
    <property type="entry name" value="Mur_ligase_M"/>
    <property type="match status" value="1"/>
</dbReference>
<dbReference type="Pfam" id="PF21799">
    <property type="entry name" value="MurD-like_N"/>
    <property type="match status" value="1"/>
</dbReference>
<dbReference type="SUPFAM" id="SSF51984">
    <property type="entry name" value="MurCD N-terminal domain"/>
    <property type="match status" value="1"/>
</dbReference>
<dbReference type="SUPFAM" id="SSF53623">
    <property type="entry name" value="MurD-like peptide ligases, catalytic domain"/>
    <property type="match status" value="1"/>
</dbReference>
<dbReference type="SUPFAM" id="SSF53244">
    <property type="entry name" value="MurD-like peptide ligases, peptide-binding domain"/>
    <property type="match status" value="1"/>
</dbReference>
<proteinExistence type="inferred from homology"/>